<feature type="propeptide" id="PRO_0000027148">
    <location>
        <begin position="1" status="less than"/>
        <end position="12"/>
    </location>
</feature>
<feature type="chain" id="PRO_0000027149" description="Proteinase T">
    <location>
        <begin position="13"/>
        <end position="293"/>
    </location>
</feature>
<feature type="domain" description="Peptidase S8" evidence="2">
    <location>
        <begin position="19"/>
        <end position="293"/>
    </location>
</feature>
<feature type="active site" description="Charge relay system" evidence="2">
    <location>
        <position position="51"/>
    </location>
</feature>
<feature type="active site" description="Charge relay system" evidence="2">
    <location>
        <position position="83"/>
    </location>
</feature>
<feature type="active site" description="Charge relay system" evidence="2">
    <location>
        <position position="238"/>
    </location>
</feature>
<feature type="disulfide bond" evidence="1">
    <location>
        <begin position="46"/>
        <end position="137"/>
    </location>
</feature>
<feature type="disulfide bond" evidence="1">
    <location>
        <begin position="192"/>
        <end position="262"/>
    </location>
</feature>
<feature type="non-terminal residue">
    <location>
        <position position="1"/>
    </location>
</feature>
<gene>
    <name type="primary">PROT</name>
</gene>
<organism>
    <name type="scientific">Parengyodontium album</name>
    <name type="common">Tritirachium album</name>
    <dbReference type="NCBI Taxonomy" id="37998"/>
    <lineage>
        <taxon>Eukaryota</taxon>
        <taxon>Fungi</taxon>
        <taxon>Dikarya</taxon>
        <taxon>Ascomycota</taxon>
        <taxon>Pezizomycotina</taxon>
        <taxon>Sordariomycetes</taxon>
        <taxon>Hypocreomycetidae</taxon>
        <taxon>Hypocreales</taxon>
        <taxon>Cordycipitaceae</taxon>
        <taxon>Parengyodontium</taxon>
    </lineage>
</organism>
<accession>P20015</accession>
<reference key="1">
    <citation type="journal article" date="1989" name="Gene">
        <title>Cloning and expression of the gene encoding a novel proteinase from Tritirachium album limber.</title>
        <authorList>
            <person name="Samal B.B."/>
            <person name="Karan B."/>
            <person name="Boone T.C."/>
            <person name="Chen K.K."/>
            <person name="Rohde M.F."/>
            <person name="Stabinsky Y."/>
        </authorList>
    </citation>
    <scope>NUCLEOTIDE SEQUENCE [GENOMIC DNA / MRNA]</scope>
    <source>
        <strain>ATCC 22563 / Limber</strain>
    </source>
</reference>
<name>PRTT_PARAQ</name>
<dbReference type="EC" id="3.4.21.-"/>
<dbReference type="EMBL" id="M54900">
    <property type="protein sequence ID" value="AAA34204.1"/>
    <property type="molecule type" value="mRNA"/>
</dbReference>
<dbReference type="EMBL" id="M54901">
    <property type="protein sequence ID" value="AAA34205.1"/>
    <property type="molecule type" value="Genomic_DNA"/>
</dbReference>
<dbReference type="PIR" id="JQ0380">
    <property type="entry name" value="JQ0380"/>
</dbReference>
<dbReference type="SMR" id="P20015"/>
<dbReference type="MEROPS" id="S08.061"/>
<dbReference type="GO" id="GO:0004252">
    <property type="term" value="F:serine-type endopeptidase activity"/>
    <property type="evidence" value="ECO:0007669"/>
    <property type="project" value="InterPro"/>
</dbReference>
<dbReference type="GO" id="GO:0006508">
    <property type="term" value="P:proteolysis"/>
    <property type="evidence" value="ECO:0007669"/>
    <property type="project" value="UniProtKB-KW"/>
</dbReference>
<dbReference type="CDD" id="cd04077">
    <property type="entry name" value="Peptidases_S8_PCSK9_ProteinaseK_like"/>
    <property type="match status" value="1"/>
</dbReference>
<dbReference type="FunFam" id="3.40.50.200:FF:000014">
    <property type="entry name" value="Proteinase K"/>
    <property type="match status" value="1"/>
</dbReference>
<dbReference type="Gene3D" id="3.40.50.200">
    <property type="entry name" value="Peptidase S8/S53 domain"/>
    <property type="match status" value="1"/>
</dbReference>
<dbReference type="InterPro" id="IPR034193">
    <property type="entry name" value="PCSK9_ProteinaseK-like"/>
</dbReference>
<dbReference type="InterPro" id="IPR000209">
    <property type="entry name" value="Peptidase_S8/S53_dom"/>
</dbReference>
<dbReference type="InterPro" id="IPR036852">
    <property type="entry name" value="Peptidase_S8/S53_dom_sf"/>
</dbReference>
<dbReference type="InterPro" id="IPR023827">
    <property type="entry name" value="Peptidase_S8_Asp-AS"/>
</dbReference>
<dbReference type="InterPro" id="IPR022398">
    <property type="entry name" value="Peptidase_S8_His-AS"/>
</dbReference>
<dbReference type="InterPro" id="IPR023828">
    <property type="entry name" value="Peptidase_S8_Ser-AS"/>
</dbReference>
<dbReference type="InterPro" id="IPR050131">
    <property type="entry name" value="Peptidase_S8_subtilisin-like"/>
</dbReference>
<dbReference type="InterPro" id="IPR015500">
    <property type="entry name" value="Peptidase_S8_subtilisin-rel"/>
</dbReference>
<dbReference type="PANTHER" id="PTHR43806:SF58">
    <property type="entry name" value="ALKALINE PROTEASE 1-RELATED"/>
    <property type="match status" value="1"/>
</dbReference>
<dbReference type="PANTHER" id="PTHR43806">
    <property type="entry name" value="PEPTIDASE S8"/>
    <property type="match status" value="1"/>
</dbReference>
<dbReference type="Pfam" id="PF00082">
    <property type="entry name" value="Peptidase_S8"/>
    <property type="match status" value="1"/>
</dbReference>
<dbReference type="PRINTS" id="PR00723">
    <property type="entry name" value="SUBTILISIN"/>
</dbReference>
<dbReference type="SUPFAM" id="SSF52743">
    <property type="entry name" value="Subtilisin-like"/>
    <property type="match status" value="1"/>
</dbReference>
<dbReference type="PROSITE" id="PS51892">
    <property type="entry name" value="SUBTILASE"/>
    <property type="match status" value="1"/>
</dbReference>
<dbReference type="PROSITE" id="PS00136">
    <property type="entry name" value="SUBTILASE_ASP"/>
    <property type="match status" value="1"/>
</dbReference>
<dbReference type="PROSITE" id="PS00137">
    <property type="entry name" value="SUBTILASE_HIS"/>
    <property type="match status" value="1"/>
</dbReference>
<dbReference type="PROSITE" id="PS00138">
    <property type="entry name" value="SUBTILASE_SER"/>
    <property type="match status" value="1"/>
</dbReference>
<sequence>EFIEQDAVVTISATQEDAPWGLARISSQEPGGTTYTYDDSAGTGTCAYIIDTGIYTNHTDFGGRAKFLKNFAGDGQDTDGNGHGTHVAGTVGGTTYGVAKKTSLFAVKVLDANGQGSNSGVIAGMDFVTKDASSQNCPKGVVVNMSLGGPSSSAVNRAAAEITSAGLFLAVAAGNEATDASSSSPASEESACTVGATDKTDTLAEYSNFGSVVDLLAPGTDIKSTWNDGRTKIISGTSMASPHVAGLGAYFLGLGQKVQGLCDYMVEKGLKDVIQSVPSDTANVLINNGEGSA</sequence>
<comment type="function">
    <text>Serine proteinase.</text>
</comment>
<comment type="biophysicochemical properties">
    <temperatureDependence>
        <text>Thermostable.</text>
    </temperatureDependence>
</comment>
<comment type="similarity">
    <text evidence="3">Belongs to the peptidase S8 family.</text>
</comment>
<proteinExistence type="evidence at protein level"/>
<evidence type="ECO:0000250" key="1"/>
<evidence type="ECO:0000255" key="2">
    <source>
        <dbReference type="PROSITE-ProRule" id="PRU01240"/>
    </source>
</evidence>
<evidence type="ECO:0000305" key="3"/>
<keyword id="KW-1015">Disulfide bond</keyword>
<keyword id="KW-0378">Hydrolase</keyword>
<keyword id="KW-0645">Protease</keyword>
<keyword id="KW-0720">Serine protease</keyword>
<protein>
    <recommendedName>
        <fullName>Proteinase T</fullName>
        <ecNumber>3.4.21.-</ecNumber>
    </recommendedName>
</protein>